<protein>
    <recommendedName>
        <fullName evidence="2">Small ribosomal subunit protein uS13c</fullName>
    </recommendedName>
    <alternativeName>
        <fullName>30S ribosomal protein S13, chloroplastic</fullName>
    </alternativeName>
    <alternativeName>
        <fullName>CS13</fullName>
    </alternativeName>
</protein>
<name>RR13_ARATH</name>
<gene>
    <name type="primary">RPS13</name>
    <name type="ordered locus">At5g14320</name>
    <name type="ORF">F18O22_110</name>
</gene>
<organism>
    <name type="scientific">Arabidopsis thaliana</name>
    <name type="common">Mouse-ear cress</name>
    <dbReference type="NCBI Taxonomy" id="3702"/>
    <lineage>
        <taxon>Eukaryota</taxon>
        <taxon>Viridiplantae</taxon>
        <taxon>Streptophyta</taxon>
        <taxon>Embryophyta</taxon>
        <taxon>Tracheophyta</taxon>
        <taxon>Spermatophyta</taxon>
        <taxon>Magnoliopsida</taxon>
        <taxon>eudicotyledons</taxon>
        <taxon>Gunneridae</taxon>
        <taxon>Pentapetalae</taxon>
        <taxon>rosids</taxon>
        <taxon>malvids</taxon>
        <taxon>Brassicales</taxon>
        <taxon>Brassicaceae</taxon>
        <taxon>Camelineae</taxon>
        <taxon>Arabidopsis</taxon>
    </lineage>
</organism>
<keyword id="KW-0025">Alternative splicing</keyword>
<keyword id="KW-0150">Chloroplast</keyword>
<keyword id="KW-0934">Plastid</keyword>
<keyword id="KW-1185">Reference proteome</keyword>
<keyword id="KW-0687">Ribonucleoprotein</keyword>
<keyword id="KW-0689">Ribosomal protein</keyword>
<keyword id="KW-0694">RNA-binding</keyword>
<keyword id="KW-0699">rRNA-binding</keyword>
<keyword id="KW-0809">Transit peptide</keyword>
<sequence>MAQMVAMPVAHSLSLICNWAKSNPLSRNTLALPASNTPNKQSLSIRCARVGGVEIPANKRIEYSLQYIHGIGRTRARQILVDLQMENKITKDMAEEELIILRDEVSKYMIEGDLRRFNALAIKRLKEIQCYRGVRHIQGLPCRGQRTKNNCRTLKGKKIAIAGKKKVSK</sequence>
<evidence type="ECO:0000250" key="1"/>
<evidence type="ECO:0000303" key="2">
    <source>
    </source>
</evidence>
<evidence type="ECO:0000305" key="3"/>
<proteinExistence type="evidence at transcript level"/>
<feature type="transit peptide" description="Chloroplast" evidence="1">
    <location>
        <begin position="1"/>
        <end position="47"/>
    </location>
</feature>
<feature type="chain" id="PRO_0000030609" description="Small ribosomal subunit protein uS13c">
    <location>
        <begin position="48"/>
        <end position="169"/>
    </location>
</feature>
<reference key="1">
    <citation type="journal article" date="1995" name="Curr. Genet.">
        <title>Characterization of the nuclear gene encoding chloroplast ribosomal protein S13 from Arabidopsis thaliana.</title>
        <authorList>
            <person name="Kumar R."/>
            <person name="Drouaud J."/>
            <person name="Raynal M."/>
            <person name="Small I."/>
        </authorList>
    </citation>
    <scope>NUCLEOTIDE SEQUENCE [GENOMIC DNA]</scope>
    <source>
        <strain>cv. Columbia</strain>
        <tissue>Green siliques</tissue>
    </source>
</reference>
<reference key="2">
    <citation type="submission" date="1995-12" db="EMBL/GenBank/DDBJ databases">
        <authorList>
            <person name="Grellet F."/>
            <person name="Cooke R."/>
            <person name="Laudie M."/>
            <person name="Raynal M."/>
            <person name="Delseny M."/>
        </authorList>
    </citation>
    <scope>NUCLEOTIDE SEQUENCE</scope>
    <source>
        <strain>cv. Columbia</strain>
    </source>
</reference>
<reference key="3">
    <citation type="journal article" date="1996" name="EMBO J.">
        <title>Transfer of rps19 to the nucleus involves the gain of an RNP-binding motif which may functionally replace RPS13 in Arabidopsis mitochondria.</title>
        <authorList>
            <person name="Sanchez H."/>
            <person name="Fester T."/>
            <person name="Kloska S."/>
            <person name="Schroeder W."/>
            <person name="Schuster W."/>
        </authorList>
    </citation>
    <scope>NUCLEOTIDE SEQUENCE [MRNA]</scope>
    <source>
        <strain>cv. C24</strain>
    </source>
</reference>
<reference key="4">
    <citation type="journal article" date="2000" name="Nature">
        <title>Sequence and analysis of chromosome 5 of the plant Arabidopsis thaliana.</title>
        <authorList>
            <person name="Tabata S."/>
            <person name="Kaneko T."/>
            <person name="Nakamura Y."/>
            <person name="Kotani H."/>
            <person name="Kato T."/>
            <person name="Asamizu E."/>
            <person name="Miyajima N."/>
            <person name="Sasamoto S."/>
            <person name="Kimura T."/>
            <person name="Hosouchi T."/>
            <person name="Kawashima K."/>
            <person name="Kohara M."/>
            <person name="Matsumoto M."/>
            <person name="Matsuno A."/>
            <person name="Muraki A."/>
            <person name="Nakayama S."/>
            <person name="Nakazaki N."/>
            <person name="Naruo K."/>
            <person name="Okumura S."/>
            <person name="Shinpo S."/>
            <person name="Takeuchi C."/>
            <person name="Wada T."/>
            <person name="Watanabe A."/>
            <person name="Yamada M."/>
            <person name="Yasuda M."/>
            <person name="Sato S."/>
            <person name="de la Bastide M."/>
            <person name="Huang E."/>
            <person name="Spiegel L."/>
            <person name="Gnoj L."/>
            <person name="O'Shaughnessy A."/>
            <person name="Preston R."/>
            <person name="Habermann K."/>
            <person name="Murray J."/>
            <person name="Johnson D."/>
            <person name="Rohlfing T."/>
            <person name="Nelson J."/>
            <person name="Stoneking T."/>
            <person name="Pepin K."/>
            <person name="Spieth J."/>
            <person name="Sekhon M."/>
            <person name="Armstrong J."/>
            <person name="Becker M."/>
            <person name="Belter E."/>
            <person name="Cordum H."/>
            <person name="Cordes M."/>
            <person name="Courtney L."/>
            <person name="Courtney W."/>
            <person name="Dante M."/>
            <person name="Du H."/>
            <person name="Edwards J."/>
            <person name="Fryman J."/>
            <person name="Haakensen B."/>
            <person name="Lamar E."/>
            <person name="Latreille P."/>
            <person name="Leonard S."/>
            <person name="Meyer R."/>
            <person name="Mulvaney E."/>
            <person name="Ozersky P."/>
            <person name="Riley A."/>
            <person name="Strowmatt C."/>
            <person name="Wagner-McPherson C."/>
            <person name="Wollam A."/>
            <person name="Yoakum M."/>
            <person name="Bell M."/>
            <person name="Dedhia N."/>
            <person name="Parnell L."/>
            <person name="Shah R."/>
            <person name="Rodriguez M."/>
            <person name="Hoon See L."/>
            <person name="Vil D."/>
            <person name="Baker J."/>
            <person name="Kirchoff K."/>
            <person name="Toth K."/>
            <person name="King L."/>
            <person name="Bahret A."/>
            <person name="Miller B."/>
            <person name="Marra M.A."/>
            <person name="Martienssen R."/>
            <person name="McCombie W.R."/>
            <person name="Wilson R.K."/>
            <person name="Murphy G."/>
            <person name="Bancroft I."/>
            <person name="Volckaert G."/>
            <person name="Wambutt R."/>
            <person name="Duesterhoeft A."/>
            <person name="Stiekema W."/>
            <person name="Pohl T."/>
            <person name="Entian K.-D."/>
            <person name="Terryn N."/>
            <person name="Hartley N."/>
            <person name="Bent E."/>
            <person name="Johnson S."/>
            <person name="Langham S.-A."/>
            <person name="McCullagh B."/>
            <person name="Robben J."/>
            <person name="Grymonprez B."/>
            <person name="Zimmermann W."/>
            <person name="Ramsperger U."/>
            <person name="Wedler H."/>
            <person name="Balke K."/>
            <person name="Wedler E."/>
            <person name="Peters S."/>
            <person name="van Staveren M."/>
            <person name="Dirkse W."/>
            <person name="Mooijman P."/>
            <person name="Klein Lankhorst R."/>
            <person name="Weitzenegger T."/>
            <person name="Bothe G."/>
            <person name="Rose M."/>
            <person name="Hauf J."/>
            <person name="Berneiser S."/>
            <person name="Hempel S."/>
            <person name="Feldpausch M."/>
            <person name="Lamberth S."/>
            <person name="Villarroel R."/>
            <person name="Gielen J."/>
            <person name="Ardiles W."/>
            <person name="Bents O."/>
            <person name="Lemcke K."/>
            <person name="Kolesov G."/>
            <person name="Mayer K.F.X."/>
            <person name="Rudd S."/>
            <person name="Schoof H."/>
            <person name="Schueller C."/>
            <person name="Zaccaria P."/>
            <person name="Mewes H.-W."/>
            <person name="Bevan M."/>
            <person name="Fransz P.F."/>
        </authorList>
    </citation>
    <scope>NUCLEOTIDE SEQUENCE [LARGE SCALE GENOMIC DNA]</scope>
    <source>
        <strain>cv. Columbia</strain>
    </source>
</reference>
<reference key="5">
    <citation type="journal article" date="2017" name="Plant J.">
        <title>Araport11: a complete reannotation of the Arabidopsis thaliana reference genome.</title>
        <authorList>
            <person name="Cheng C.Y."/>
            <person name="Krishnakumar V."/>
            <person name="Chan A.P."/>
            <person name="Thibaud-Nissen F."/>
            <person name="Schobel S."/>
            <person name="Town C.D."/>
        </authorList>
    </citation>
    <scope>GENOME REANNOTATION</scope>
    <source>
        <strain>cv. Columbia</strain>
    </source>
</reference>
<reference key="6">
    <citation type="journal article" date="2003" name="Science">
        <title>Empirical analysis of transcriptional activity in the Arabidopsis genome.</title>
        <authorList>
            <person name="Yamada K."/>
            <person name="Lim J."/>
            <person name="Dale J.M."/>
            <person name="Chen H."/>
            <person name="Shinn P."/>
            <person name="Palm C.J."/>
            <person name="Southwick A.M."/>
            <person name="Wu H.C."/>
            <person name="Kim C.J."/>
            <person name="Nguyen M."/>
            <person name="Pham P.K."/>
            <person name="Cheuk R.F."/>
            <person name="Karlin-Newmann G."/>
            <person name="Liu S.X."/>
            <person name="Lam B."/>
            <person name="Sakano H."/>
            <person name="Wu T."/>
            <person name="Yu G."/>
            <person name="Miranda M."/>
            <person name="Quach H.L."/>
            <person name="Tripp M."/>
            <person name="Chang C.H."/>
            <person name="Lee J.M."/>
            <person name="Toriumi M.J."/>
            <person name="Chan M.M."/>
            <person name="Tang C.C."/>
            <person name="Onodera C.S."/>
            <person name="Deng J.M."/>
            <person name="Akiyama K."/>
            <person name="Ansari Y."/>
            <person name="Arakawa T."/>
            <person name="Banh J."/>
            <person name="Banno F."/>
            <person name="Bowser L."/>
            <person name="Brooks S.Y."/>
            <person name="Carninci P."/>
            <person name="Chao Q."/>
            <person name="Choy N."/>
            <person name="Enju A."/>
            <person name="Goldsmith A.D."/>
            <person name="Gurjal M."/>
            <person name="Hansen N.F."/>
            <person name="Hayashizaki Y."/>
            <person name="Johnson-Hopson C."/>
            <person name="Hsuan V.W."/>
            <person name="Iida K."/>
            <person name="Karnes M."/>
            <person name="Khan S."/>
            <person name="Koesema E."/>
            <person name="Ishida J."/>
            <person name="Jiang P.X."/>
            <person name="Jones T."/>
            <person name="Kawai J."/>
            <person name="Kamiya A."/>
            <person name="Meyers C."/>
            <person name="Nakajima M."/>
            <person name="Narusaka M."/>
            <person name="Seki M."/>
            <person name="Sakurai T."/>
            <person name="Satou M."/>
            <person name="Tamse R."/>
            <person name="Vaysberg M."/>
            <person name="Wallender E.K."/>
            <person name="Wong C."/>
            <person name="Yamamura Y."/>
            <person name="Yuan S."/>
            <person name="Shinozaki K."/>
            <person name="Davis R.W."/>
            <person name="Theologis A."/>
            <person name="Ecker J.R."/>
        </authorList>
    </citation>
    <scope>NUCLEOTIDE SEQUENCE [LARGE SCALE MRNA]</scope>
    <source>
        <strain>cv. Columbia</strain>
    </source>
</reference>
<reference key="7">
    <citation type="journal article" date="1993" name="Plant J.">
        <title>An inventory of 1152 expressed sequence tags obtained by partial sequencing of cDNAs from Arabidopsis thaliana.</title>
        <authorList>
            <person name="Hoefte H."/>
            <person name="Desprez T."/>
            <person name="Amselem J."/>
            <person name="Chiapello H."/>
            <person name="Rouze P."/>
            <person name="Caboche M."/>
            <person name="Moisan A."/>
            <person name="Jourjon M.-F."/>
            <person name="Charpenteau J.-L."/>
            <person name="Berthomieu P."/>
            <person name="Guerrier D."/>
            <person name="Giraudat J."/>
            <person name="Quigley F."/>
            <person name="Thomas F."/>
            <person name="Yu D.-Y."/>
            <person name="Mache R."/>
            <person name="Raynal M."/>
            <person name="Cooke R."/>
            <person name="Grellet F."/>
            <person name="Delseny M."/>
            <person name="Parmentier Y."/>
            <person name="de Marcillac G."/>
            <person name="Gigot C."/>
            <person name="Fleck J."/>
            <person name="Philipps G."/>
            <person name="Axelos M."/>
            <person name="Bardet C."/>
            <person name="Tremousaygue D."/>
            <person name="Lescure B."/>
        </authorList>
    </citation>
    <scope>NUCLEOTIDE SEQUENCE [LARGE SCALE MRNA]</scope>
    <source>
        <strain>cv. Columbia</strain>
        <tissue>Green siliques</tissue>
    </source>
</reference>
<reference key="8">
    <citation type="journal article" date="2023" name="Plant Cell">
        <title>An updated nomenclature for plant ribosomal protein genes.</title>
        <authorList>
            <person name="Scarpin M.R."/>
            <person name="Busche M."/>
            <person name="Martinez R.E."/>
            <person name="Harper L.C."/>
            <person name="Reiser L."/>
            <person name="Szakonyi D."/>
            <person name="Merchante C."/>
            <person name="Lan T."/>
            <person name="Xiong W."/>
            <person name="Mo B."/>
            <person name="Tang G."/>
            <person name="Chen X."/>
            <person name="Bailey-Serres J."/>
            <person name="Browning K.S."/>
            <person name="Brunkard J.O."/>
        </authorList>
    </citation>
    <scope>NOMENCLATURE</scope>
</reference>
<accession>P42732</accession>
<accession>Q9LY97</accession>
<comment type="function">
    <text evidence="1">Located at the top of the head of the 30S subunit, it contacts several helices of the 16S rRNA.</text>
</comment>
<comment type="subunit">
    <text>Part of the 30S ribosomal subunit.</text>
</comment>
<comment type="subcellular location">
    <subcellularLocation>
        <location>Plastid</location>
        <location>Chloroplast</location>
    </subcellularLocation>
</comment>
<comment type="alternative products">
    <event type="alternative splicing"/>
    <isoform>
        <id>P42732-1</id>
        <name>1</name>
        <sequence type="displayed"/>
    </isoform>
    <text>A number of isoforms are produced. According to EST sequences.</text>
</comment>
<comment type="similarity">
    <text evidence="3">Belongs to the universal ribosomal protein uS13 family.</text>
</comment>
<comment type="sequence caution" evidence="3">
    <conflict type="erroneous gene model prediction">
        <sequence resource="EMBL-CDS" id="CAB87771"/>
    </conflict>
</comment>
<dbReference type="EMBL" id="Z47986">
    <property type="protein sequence ID" value="CAA88028.1"/>
    <property type="molecule type" value="Genomic_DNA"/>
</dbReference>
<dbReference type="EMBL" id="X91955">
    <property type="protein sequence ID" value="CAA63021.1"/>
    <property type="molecule type" value="mRNA"/>
</dbReference>
<dbReference type="EMBL" id="X86734">
    <property type="protein sequence ID" value="CAA60413.1"/>
    <property type="molecule type" value="mRNA"/>
</dbReference>
<dbReference type="EMBL" id="AL163817">
    <property type="protein sequence ID" value="CAB87771.1"/>
    <property type="status" value="ALT_SEQ"/>
    <property type="molecule type" value="Genomic_DNA"/>
</dbReference>
<dbReference type="EMBL" id="CP002688">
    <property type="protein sequence ID" value="AED92016.1"/>
    <property type="molecule type" value="Genomic_DNA"/>
</dbReference>
<dbReference type="EMBL" id="AY052738">
    <property type="protein sequence ID" value="AAK96452.1"/>
    <property type="molecule type" value="mRNA"/>
</dbReference>
<dbReference type="EMBL" id="AY039533">
    <property type="protein sequence ID" value="AAK62589.1"/>
    <property type="molecule type" value="mRNA"/>
</dbReference>
<dbReference type="EMBL" id="Z17611">
    <property type="protein sequence ID" value="CAA79013.1"/>
    <property type="molecule type" value="mRNA"/>
</dbReference>
<dbReference type="PIR" id="S59594">
    <property type="entry name" value="S59594"/>
</dbReference>
<dbReference type="RefSeq" id="NP_568299.1">
    <molecule id="P42732-1"/>
    <property type="nucleotide sequence ID" value="NM_121436.5"/>
</dbReference>
<dbReference type="SMR" id="P42732"/>
<dbReference type="BioGRID" id="16559">
    <property type="interactions" value="54"/>
</dbReference>
<dbReference type="FunCoup" id="P42732">
    <property type="interactions" value="1248"/>
</dbReference>
<dbReference type="STRING" id="3702.P42732"/>
<dbReference type="PaxDb" id="3702-AT5G14320.1"/>
<dbReference type="ProteomicsDB" id="226760">
    <molecule id="P42732-1"/>
</dbReference>
<dbReference type="EnsemblPlants" id="AT5G14320.1">
    <molecule id="P42732-1"/>
    <property type="protein sequence ID" value="AT5G14320.1"/>
    <property type="gene ID" value="AT5G14320"/>
</dbReference>
<dbReference type="GeneID" id="831282"/>
<dbReference type="Gramene" id="AT5G14320.1">
    <molecule id="P42732-1"/>
    <property type="protein sequence ID" value="AT5G14320.1"/>
    <property type="gene ID" value="AT5G14320"/>
</dbReference>
<dbReference type="KEGG" id="ath:AT5G14320"/>
<dbReference type="Araport" id="AT5G14320"/>
<dbReference type="TAIR" id="AT5G14320">
    <property type="gene designation" value="EMB3137"/>
</dbReference>
<dbReference type="eggNOG" id="KOG3311">
    <property type="taxonomic scope" value="Eukaryota"/>
</dbReference>
<dbReference type="HOGENOM" id="CLU_103849_1_0_1"/>
<dbReference type="InParanoid" id="P42732"/>
<dbReference type="OMA" id="MNVKRLM"/>
<dbReference type="OrthoDB" id="525520at2759"/>
<dbReference type="PhylomeDB" id="P42732"/>
<dbReference type="PRO" id="PR:P42732"/>
<dbReference type="Proteomes" id="UP000006548">
    <property type="component" value="Chromosome 5"/>
</dbReference>
<dbReference type="ExpressionAtlas" id="P42732">
    <property type="expression patterns" value="baseline and differential"/>
</dbReference>
<dbReference type="GO" id="GO:0009507">
    <property type="term" value="C:chloroplast"/>
    <property type="evidence" value="ECO:0007005"/>
    <property type="project" value="TAIR"/>
</dbReference>
<dbReference type="GO" id="GO:0009941">
    <property type="term" value="C:chloroplast envelope"/>
    <property type="evidence" value="ECO:0007005"/>
    <property type="project" value="TAIR"/>
</dbReference>
<dbReference type="GO" id="GO:0009570">
    <property type="term" value="C:chloroplast stroma"/>
    <property type="evidence" value="ECO:0007005"/>
    <property type="project" value="TAIR"/>
</dbReference>
<dbReference type="GO" id="GO:1990904">
    <property type="term" value="C:ribonucleoprotein complex"/>
    <property type="evidence" value="ECO:0007669"/>
    <property type="project" value="UniProtKB-KW"/>
</dbReference>
<dbReference type="GO" id="GO:0005840">
    <property type="term" value="C:ribosome"/>
    <property type="evidence" value="ECO:0007669"/>
    <property type="project" value="UniProtKB-KW"/>
</dbReference>
<dbReference type="GO" id="GO:0003729">
    <property type="term" value="F:mRNA binding"/>
    <property type="evidence" value="ECO:0000314"/>
    <property type="project" value="TAIR"/>
</dbReference>
<dbReference type="GO" id="GO:0019843">
    <property type="term" value="F:rRNA binding"/>
    <property type="evidence" value="ECO:0007669"/>
    <property type="project" value="UniProtKB-KW"/>
</dbReference>
<dbReference type="GO" id="GO:0003735">
    <property type="term" value="F:structural constituent of ribosome"/>
    <property type="evidence" value="ECO:0007669"/>
    <property type="project" value="InterPro"/>
</dbReference>
<dbReference type="GO" id="GO:0006412">
    <property type="term" value="P:translation"/>
    <property type="evidence" value="ECO:0007669"/>
    <property type="project" value="InterPro"/>
</dbReference>
<dbReference type="FunFam" id="1.10.8.50:FF:000001">
    <property type="entry name" value="30S ribosomal protein S13"/>
    <property type="match status" value="1"/>
</dbReference>
<dbReference type="Gene3D" id="1.10.8.50">
    <property type="match status" value="1"/>
</dbReference>
<dbReference type="Gene3D" id="4.10.910.10">
    <property type="entry name" value="30s ribosomal protein s13, domain 2"/>
    <property type="match status" value="1"/>
</dbReference>
<dbReference type="HAMAP" id="MF_01315">
    <property type="entry name" value="Ribosomal_uS13"/>
    <property type="match status" value="1"/>
</dbReference>
<dbReference type="InterPro" id="IPR027437">
    <property type="entry name" value="Rbsml_uS13_C"/>
</dbReference>
<dbReference type="InterPro" id="IPR001892">
    <property type="entry name" value="Ribosomal_uS13"/>
</dbReference>
<dbReference type="InterPro" id="IPR010979">
    <property type="entry name" value="Ribosomal_uS13-like_H2TH"/>
</dbReference>
<dbReference type="InterPro" id="IPR019980">
    <property type="entry name" value="Ribosomal_uS13_bac-type"/>
</dbReference>
<dbReference type="InterPro" id="IPR018269">
    <property type="entry name" value="Ribosomal_uS13_CS"/>
</dbReference>
<dbReference type="NCBIfam" id="TIGR03631">
    <property type="entry name" value="uS13_bact"/>
    <property type="match status" value="1"/>
</dbReference>
<dbReference type="PANTHER" id="PTHR10871">
    <property type="entry name" value="30S RIBOSOMAL PROTEIN S13/40S RIBOSOMAL PROTEIN S18"/>
    <property type="match status" value="1"/>
</dbReference>
<dbReference type="PANTHER" id="PTHR10871:SF1">
    <property type="entry name" value="SMALL RIBOSOMAL SUBUNIT PROTEIN US13M"/>
    <property type="match status" value="1"/>
</dbReference>
<dbReference type="Pfam" id="PF00416">
    <property type="entry name" value="Ribosomal_S13"/>
    <property type="match status" value="1"/>
</dbReference>
<dbReference type="SUPFAM" id="SSF46946">
    <property type="entry name" value="S13-like H2TH domain"/>
    <property type="match status" value="1"/>
</dbReference>
<dbReference type="PROSITE" id="PS00646">
    <property type="entry name" value="RIBOSOMAL_S13_1"/>
    <property type="match status" value="1"/>
</dbReference>
<dbReference type="PROSITE" id="PS50159">
    <property type="entry name" value="RIBOSOMAL_S13_2"/>
    <property type="match status" value="1"/>
</dbReference>